<accession>Q8WJP2</accession>
<protein>
    <recommendedName>
        <fullName evidence="1">Maturase K</fullName>
    </recommendedName>
    <alternativeName>
        <fullName evidence="1">Intron maturase</fullName>
    </alternativeName>
</protein>
<dbReference type="EMBL" id="AF288116">
    <property type="protein sequence ID" value="AAL36010.1"/>
    <property type="molecule type" value="Genomic_DNA"/>
</dbReference>
<dbReference type="RefSeq" id="YP_010568918.1">
    <property type="nucleotide sequence ID" value="NC_068706.1"/>
</dbReference>
<dbReference type="GeneID" id="76813019"/>
<dbReference type="GO" id="GO:0009507">
    <property type="term" value="C:chloroplast"/>
    <property type="evidence" value="ECO:0007669"/>
    <property type="project" value="UniProtKB-SubCell"/>
</dbReference>
<dbReference type="GO" id="GO:0003723">
    <property type="term" value="F:RNA binding"/>
    <property type="evidence" value="ECO:0007669"/>
    <property type="project" value="UniProtKB-KW"/>
</dbReference>
<dbReference type="GO" id="GO:0006397">
    <property type="term" value="P:mRNA processing"/>
    <property type="evidence" value="ECO:0007669"/>
    <property type="project" value="UniProtKB-KW"/>
</dbReference>
<dbReference type="GO" id="GO:0008380">
    <property type="term" value="P:RNA splicing"/>
    <property type="evidence" value="ECO:0007669"/>
    <property type="project" value="UniProtKB-UniRule"/>
</dbReference>
<dbReference type="GO" id="GO:0008033">
    <property type="term" value="P:tRNA processing"/>
    <property type="evidence" value="ECO:0007669"/>
    <property type="project" value="UniProtKB-KW"/>
</dbReference>
<dbReference type="HAMAP" id="MF_01390">
    <property type="entry name" value="MatK"/>
    <property type="match status" value="1"/>
</dbReference>
<dbReference type="InterPro" id="IPR024937">
    <property type="entry name" value="Domain_X"/>
</dbReference>
<dbReference type="InterPro" id="IPR002866">
    <property type="entry name" value="Maturase_MatK"/>
</dbReference>
<dbReference type="InterPro" id="IPR024942">
    <property type="entry name" value="Maturase_MatK_N"/>
</dbReference>
<dbReference type="PANTHER" id="PTHR34811">
    <property type="entry name" value="MATURASE K"/>
    <property type="match status" value="1"/>
</dbReference>
<dbReference type="PANTHER" id="PTHR34811:SF1">
    <property type="entry name" value="MATURASE K"/>
    <property type="match status" value="1"/>
</dbReference>
<dbReference type="Pfam" id="PF01348">
    <property type="entry name" value="Intron_maturas2"/>
    <property type="match status" value="1"/>
</dbReference>
<dbReference type="Pfam" id="PF01824">
    <property type="entry name" value="MatK_N"/>
    <property type="match status" value="1"/>
</dbReference>
<comment type="function">
    <text evidence="1">Usually encoded in the trnK tRNA gene intron. Probably assists in splicing its own and other chloroplast group II introns.</text>
</comment>
<comment type="subcellular location">
    <subcellularLocation>
        <location>Plastid</location>
        <location>Chloroplast</location>
    </subcellularLocation>
</comment>
<comment type="similarity">
    <text evidence="1">Belongs to the intron maturase 2 family. MatK subfamily.</text>
</comment>
<proteinExistence type="inferred from homology"/>
<reference key="1">
    <citation type="submission" date="2000-07" db="EMBL/GenBank/DDBJ databases">
        <title>Phylogenetic relationships among putative genes encoding polygalacturonase inhibitor proteins (PGIPs) in Rosaceae.</title>
        <authorList>
            <person name="Potter D."/>
            <person name="Gao F."/>
            <person name="Oh S.-H."/>
            <person name="Baggett S."/>
        </authorList>
    </citation>
    <scope>NUCLEOTIDE SEQUENCE [GENOMIC DNA]</scope>
</reference>
<geneLocation type="chloroplast"/>
<name>MATK_PRULA</name>
<organism>
    <name type="scientific">Prunus laurocerasus</name>
    <name type="common">Cherry laurel</name>
    <name type="synonym">Laurocerasus officinalis</name>
    <dbReference type="NCBI Taxonomy" id="32242"/>
    <lineage>
        <taxon>Eukaryota</taxon>
        <taxon>Viridiplantae</taxon>
        <taxon>Streptophyta</taxon>
        <taxon>Embryophyta</taxon>
        <taxon>Tracheophyta</taxon>
        <taxon>Spermatophyta</taxon>
        <taxon>Magnoliopsida</taxon>
        <taxon>eudicotyledons</taxon>
        <taxon>Gunneridae</taxon>
        <taxon>Pentapetalae</taxon>
        <taxon>rosids</taxon>
        <taxon>fabids</taxon>
        <taxon>Rosales</taxon>
        <taxon>Rosaceae</taxon>
        <taxon>Amygdaloideae</taxon>
        <taxon>Amygdaleae</taxon>
        <taxon>Prunus</taxon>
    </lineage>
</organism>
<evidence type="ECO:0000255" key="1">
    <source>
        <dbReference type="HAMAP-Rule" id="MF_01390"/>
    </source>
</evidence>
<gene>
    <name evidence="1" type="primary">matK</name>
</gene>
<feature type="chain" id="PRO_0000143653" description="Maturase K">
    <location>
        <begin position="1"/>
        <end position="500"/>
    </location>
</feature>
<keyword id="KW-0150">Chloroplast</keyword>
<keyword id="KW-0507">mRNA processing</keyword>
<keyword id="KW-0934">Plastid</keyword>
<keyword id="KW-0694">RNA-binding</keyword>
<keyword id="KW-0819">tRNA processing</keyword>
<sequence length="500" mass="59398">MEEFQGYLELDRYQQHDFLHPLIFREYIYALAHDHGLNRSILLGYDNKSSLLIIKRLISRMYKQNRFIISANDSNQKKNLGYNKNLYSQIISEGFAVIVEIPFSLRLVSSATEIVKSYNLRSIHSIFPFLEDKFPQLNYVSDVLIPYPIHLEILVQTLRYWVKDASSLHLLRLFLHEYYNWNSLITSNNFFFFSKSNPRLFLLLYNSHVCEYEFILLFLRNQSSHLQLISSGIFFERIHFYEKIKYPVEEVFANDFPAAILWFFKDPFMHYVRYQGKSILASKDTPLLMNKWKYYLVNLWQCHSYVWSQPGRIYINKLSKHSLDFLGYFSSIRPNLSVVRSQMLENSFITDNAMKKLDTLVPIIPLIGSLAKVKFCNALGHPISKSTWADSSDFDIIDRFLRIFRNLSHYYSGSSRKKSLYRIKYILRLSCVKTLARKHKSTVRTFLKRLGSKLLEEFFTEEEQILSLIFPRASYTLKKFYSGRIWYLDIFCINDLINHE</sequence>